<reference key="1">
    <citation type="journal article" date="2003" name="Proc. Natl. Acad. Sci. U.S.A.">
        <title>The complete genome sequence of Mycobacterium bovis.</title>
        <authorList>
            <person name="Garnier T."/>
            <person name="Eiglmeier K."/>
            <person name="Camus J.-C."/>
            <person name="Medina N."/>
            <person name="Mansoor H."/>
            <person name="Pryor M."/>
            <person name="Duthoy S."/>
            <person name="Grondin S."/>
            <person name="Lacroix C."/>
            <person name="Monsempe C."/>
            <person name="Simon S."/>
            <person name="Harris B."/>
            <person name="Atkin R."/>
            <person name="Doggett J."/>
            <person name="Mayes R."/>
            <person name="Keating L."/>
            <person name="Wheeler P.R."/>
            <person name="Parkhill J."/>
            <person name="Barrell B.G."/>
            <person name="Cole S.T."/>
            <person name="Gordon S.V."/>
            <person name="Hewinson R.G."/>
        </authorList>
    </citation>
    <scope>NUCLEOTIDE SEQUENCE [LARGE SCALE GENOMIC DNA]</scope>
    <source>
        <strain>ATCC BAA-935 / AF2122/97</strain>
    </source>
</reference>
<reference key="2">
    <citation type="journal article" date="2017" name="Genome Announc.">
        <title>Updated reference genome sequence and annotation of Mycobacterium bovis AF2122/97.</title>
        <authorList>
            <person name="Malone K.M."/>
            <person name="Farrell D."/>
            <person name="Stuber T.P."/>
            <person name="Schubert O.T."/>
            <person name="Aebersold R."/>
            <person name="Robbe-Austerman S."/>
            <person name="Gordon S.V."/>
        </authorList>
    </citation>
    <scope>NUCLEOTIDE SEQUENCE [LARGE SCALE GENOMIC DNA]</scope>
    <scope>GENOME REANNOTATION</scope>
    <source>
        <strain>ATCC BAA-935 / AF2122/97</strain>
    </source>
</reference>
<comment type="function">
    <text evidence="1">Catalyzes the attachment of glycine to tRNA(Gly).</text>
</comment>
<comment type="catalytic activity">
    <reaction evidence="1">
        <text>tRNA(Gly) + glycine + ATP = glycyl-tRNA(Gly) + AMP + diphosphate</text>
        <dbReference type="Rhea" id="RHEA:16013"/>
        <dbReference type="Rhea" id="RHEA-COMP:9664"/>
        <dbReference type="Rhea" id="RHEA-COMP:9683"/>
        <dbReference type="ChEBI" id="CHEBI:30616"/>
        <dbReference type="ChEBI" id="CHEBI:33019"/>
        <dbReference type="ChEBI" id="CHEBI:57305"/>
        <dbReference type="ChEBI" id="CHEBI:78442"/>
        <dbReference type="ChEBI" id="CHEBI:78522"/>
        <dbReference type="ChEBI" id="CHEBI:456215"/>
        <dbReference type="EC" id="6.1.1.14"/>
    </reaction>
</comment>
<comment type="subunit">
    <text evidence="1">Homodimer.</text>
</comment>
<comment type="subcellular location">
    <subcellularLocation>
        <location evidence="1">Cytoplasm</location>
    </subcellularLocation>
</comment>
<comment type="similarity">
    <text evidence="1">Belongs to the class-II aminoacyl-tRNA synthetase family.</text>
</comment>
<sequence length="463" mass="52938">MHHPVAPVIDTVVNLAKRRGFVYPSGEIYGGTKSAWDYGPLGVELKENIKRQWWRSVVTGRDDVVGIDSSIILPREVWVASGHVDVFHDPLVESLITHKRYRADHLIEAYEAKHGHPPPNGLADIRDPETGEPGQWTQPREFNMMLKTYLGPIETEEGLHYLRPETAQGIFVNFANVVTTARKKPPFGIGQIGKSFRNEITPGNFIFRTREFEQMEMEFFVEPATAKEWHQYWIDNRLQWYIDLGIRRENLRLWEHPKDKLSHYSDRTVDIEYKFGFMGNPWGELEGVANRTDFDLSTHARHSGVDLSFYDQINDVRYTPYVIEPAAGLTRSFMAFLIDAYTEDEAPNTKGGMDKRTVLRLDPRLAPVKAAVLPLSRHADLSPKARDLGAELRKCWNIDFDDAGAIGRRYRRQDEVGTPFCVTVDFDSLQDNAVTVRERDAMTQDRVAMSSVADYLAVRLKGS</sequence>
<evidence type="ECO:0000255" key="1">
    <source>
        <dbReference type="HAMAP-Rule" id="MF_00253"/>
    </source>
</evidence>
<protein>
    <recommendedName>
        <fullName evidence="1">Glycine--tRNA ligase</fullName>
        <ecNumber evidence="1">6.1.1.14</ecNumber>
    </recommendedName>
    <alternativeName>
        <fullName evidence="1">Glycyl-tRNA synthetase</fullName>
        <shortName evidence="1">GlyRS</shortName>
    </alternativeName>
</protein>
<feature type="chain" id="PRO_0000072962" description="Glycine--tRNA ligase">
    <location>
        <begin position="1"/>
        <end position="463"/>
    </location>
</feature>
<feature type="binding site" evidence="1">
    <location>
        <position position="102"/>
    </location>
    <ligand>
        <name>substrate</name>
    </ligand>
</feature>
<feature type="binding site" evidence="1">
    <location>
        <position position="165"/>
    </location>
    <ligand>
        <name>substrate</name>
    </ligand>
</feature>
<feature type="binding site" evidence="1">
    <location>
        <begin position="197"/>
        <end position="199"/>
    </location>
    <ligand>
        <name>ATP</name>
        <dbReference type="ChEBI" id="CHEBI:30616"/>
    </ligand>
</feature>
<feature type="binding site" evidence="1">
    <location>
        <begin position="207"/>
        <end position="212"/>
    </location>
    <ligand>
        <name>ATP</name>
        <dbReference type="ChEBI" id="CHEBI:30616"/>
    </ligand>
</feature>
<feature type="binding site" evidence="1">
    <location>
        <begin position="212"/>
        <end position="216"/>
    </location>
    <ligand>
        <name>substrate</name>
    </ligand>
</feature>
<feature type="binding site" evidence="1">
    <location>
        <begin position="284"/>
        <end position="285"/>
    </location>
    <ligand>
        <name>ATP</name>
        <dbReference type="ChEBI" id="CHEBI:30616"/>
    </ligand>
</feature>
<feature type="binding site" evidence="1">
    <location>
        <begin position="324"/>
        <end position="328"/>
    </location>
    <ligand>
        <name>substrate</name>
    </ligand>
</feature>
<feature type="binding site" evidence="1">
    <location>
        <begin position="328"/>
        <end position="331"/>
    </location>
    <ligand>
        <name>ATP</name>
        <dbReference type="ChEBI" id="CHEBI:30616"/>
    </ligand>
</feature>
<organism>
    <name type="scientific">Mycobacterium bovis (strain ATCC BAA-935 / AF2122/97)</name>
    <dbReference type="NCBI Taxonomy" id="233413"/>
    <lineage>
        <taxon>Bacteria</taxon>
        <taxon>Bacillati</taxon>
        <taxon>Actinomycetota</taxon>
        <taxon>Actinomycetes</taxon>
        <taxon>Mycobacteriales</taxon>
        <taxon>Mycobacteriaceae</taxon>
        <taxon>Mycobacterium</taxon>
        <taxon>Mycobacterium tuberculosis complex</taxon>
    </lineage>
</organism>
<keyword id="KW-0030">Aminoacyl-tRNA synthetase</keyword>
<keyword id="KW-0067">ATP-binding</keyword>
<keyword id="KW-0963">Cytoplasm</keyword>
<keyword id="KW-0436">Ligase</keyword>
<keyword id="KW-0547">Nucleotide-binding</keyword>
<keyword id="KW-0648">Protein biosynthesis</keyword>
<keyword id="KW-1185">Reference proteome</keyword>
<gene>
    <name evidence="1" type="primary">glyQS</name>
    <name type="synonym">glyS</name>
    <name type="ordered locus">BQ2027_MB2378C</name>
</gene>
<accession>P67033</accession>
<accession>A0A1R3Y0Z0</accession>
<accession>O65932</accession>
<accession>X2BKU2</accession>
<name>SYG_MYCBO</name>
<dbReference type="EC" id="6.1.1.14" evidence="1"/>
<dbReference type="EMBL" id="LT708304">
    <property type="protein sequence ID" value="SIU00990.1"/>
    <property type="molecule type" value="Genomic_DNA"/>
</dbReference>
<dbReference type="RefSeq" id="NP_856027.1">
    <property type="nucleotide sequence ID" value="NC_002945.3"/>
</dbReference>
<dbReference type="RefSeq" id="WP_003412200.1">
    <property type="nucleotide sequence ID" value="NC_002945.4"/>
</dbReference>
<dbReference type="SMR" id="P67033"/>
<dbReference type="KEGG" id="mbo:BQ2027_MB2378C"/>
<dbReference type="PATRIC" id="fig|233413.5.peg.2613"/>
<dbReference type="Proteomes" id="UP000001419">
    <property type="component" value="Chromosome"/>
</dbReference>
<dbReference type="GO" id="GO:0005737">
    <property type="term" value="C:cytoplasm"/>
    <property type="evidence" value="ECO:0007669"/>
    <property type="project" value="UniProtKB-SubCell"/>
</dbReference>
<dbReference type="GO" id="GO:0005524">
    <property type="term" value="F:ATP binding"/>
    <property type="evidence" value="ECO:0007669"/>
    <property type="project" value="UniProtKB-UniRule"/>
</dbReference>
<dbReference type="GO" id="GO:0004820">
    <property type="term" value="F:glycine-tRNA ligase activity"/>
    <property type="evidence" value="ECO:0000250"/>
    <property type="project" value="UniProtKB"/>
</dbReference>
<dbReference type="GO" id="GO:0046983">
    <property type="term" value="F:protein dimerization activity"/>
    <property type="evidence" value="ECO:0000250"/>
    <property type="project" value="UniProtKB"/>
</dbReference>
<dbReference type="GO" id="GO:0006426">
    <property type="term" value="P:glycyl-tRNA aminoacylation"/>
    <property type="evidence" value="ECO:0007669"/>
    <property type="project" value="UniProtKB-UniRule"/>
</dbReference>
<dbReference type="CDD" id="cd00774">
    <property type="entry name" value="GlyRS-like_core"/>
    <property type="match status" value="1"/>
</dbReference>
<dbReference type="CDD" id="cd00858">
    <property type="entry name" value="GlyRS_anticodon"/>
    <property type="match status" value="1"/>
</dbReference>
<dbReference type="FunFam" id="3.40.50.800:FF:000002">
    <property type="entry name" value="Glycine--tRNA ligase"/>
    <property type="match status" value="1"/>
</dbReference>
<dbReference type="Gene3D" id="3.40.50.800">
    <property type="entry name" value="Anticodon-binding domain"/>
    <property type="match status" value="1"/>
</dbReference>
<dbReference type="Gene3D" id="3.30.930.10">
    <property type="entry name" value="Bira Bifunctional Protein, Domain 2"/>
    <property type="match status" value="1"/>
</dbReference>
<dbReference type="HAMAP" id="MF_00253_B">
    <property type="entry name" value="Gly_tRNA_synth_B"/>
    <property type="match status" value="1"/>
</dbReference>
<dbReference type="InterPro" id="IPR002314">
    <property type="entry name" value="aa-tRNA-synt_IIb"/>
</dbReference>
<dbReference type="InterPro" id="IPR006195">
    <property type="entry name" value="aa-tRNA-synth_II"/>
</dbReference>
<dbReference type="InterPro" id="IPR045864">
    <property type="entry name" value="aa-tRNA-synth_II/BPL/LPL"/>
</dbReference>
<dbReference type="InterPro" id="IPR004154">
    <property type="entry name" value="Anticodon-bd"/>
</dbReference>
<dbReference type="InterPro" id="IPR036621">
    <property type="entry name" value="Anticodon-bd_dom_sf"/>
</dbReference>
<dbReference type="InterPro" id="IPR027031">
    <property type="entry name" value="Gly-tRNA_synthase/POLG2"/>
</dbReference>
<dbReference type="InterPro" id="IPR022961">
    <property type="entry name" value="Gly_tRNA_ligase_bac"/>
</dbReference>
<dbReference type="InterPro" id="IPR033731">
    <property type="entry name" value="GlyRS-like_core"/>
</dbReference>
<dbReference type="InterPro" id="IPR002315">
    <property type="entry name" value="tRNA-synt_gly"/>
</dbReference>
<dbReference type="NCBIfam" id="TIGR00389">
    <property type="entry name" value="glyS_dimeric"/>
    <property type="match status" value="1"/>
</dbReference>
<dbReference type="NCBIfam" id="NF003211">
    <property type="entry name" value="PRK04173.1"/>
    <property type="match status" value="1"/>
</dbReference>
<dbReference type="PANTHER" id="PTHR10745:SF8">
    <property type="entry name" value="DNA POLYMERASE SUBUNIT GAMMA-2, MITOCHONDRIAL"/>
    <property type="match status" value="1"/>
</dbReference>
<dbReference type="PANTHER" id="PTHR10745">
    <property type="entry name" value="GLYCYL-TRNA SYNTHETASE/DNA POLYMERASE SUBUNIT GAMMA-2"/>
    <property type="match status" value="1"/>
</dbReference>
<dbReference type="Pfam" id="PF03129">
    <property type="entry name" value="HGTP_anticodon"/>
    <property type="match status" value="1"/>
</dbReference>
<dbReference type="Pfam" id="PF00587">
    <property type="entry name" value="tRNA-synt_2b"/>
    <property type="match status" value="1"/>
</dbReference>
<dbReference type="PRINTS" id="PR01043">
    <property type="entry name" value="TRNASYNTHGLY"/>
</dbReference>
<dbReference type="SUPFAM" id="SSF52954">
    <property type="entry name" value="Class II aaRS ABD-related"/>
    <property type="match status" value="1"/>
</dbReference>
<dbReference type="SUPFAM" id="SSF55681">
    <property type="entry name" value="Class II aaRS and biotin synthetases"/>
    <property type="match status" value="1"/>
</dbReference>
<dbReference type="PROSITE" id="PS50862">
    <property type="entry name" value="AA_TRNA_LIGASE_II"/>
    <property type="match status" value="1"/>
</dbReference>
<proteinExistence type="inferred from homology"/>